<comment type="function">
    <text evidence="1">Binds directly to 16S ribosomal RNA.</text>
</comment>
<comment type="similarity">
    <text evidence="1">Belongs to the bacterial ribosomal protein bS20 family.</text>
</comment>
<name>RS20_SYNFM</name>
<proteinExistence type="inferred from homology"/>
<accession>A0LK18</accession>
<gene>
    <name evidence="1" type="primary">rpsT</name>
    <name type="ordered locus">Sfum_2087</name>
</gene>
<reference key="1">
    <citation type="submission" date="2006-10" db="EMBL/GenBank/DDBJ databases">
        <title>Complete sequence of Syntrophobacter fumaroxidans MPOB.</title>
        <authorList>
            <consortium name="US DOE Joint Genome Institute"/>
            <person name="Copeland A."/>
            <person name="Lucas S."/>
            <person name="Lapidus A."/>
            <person name="Barry K."/>
            <person name="Detter J.C."/>
            <person name="Glavina del Rio T."/>
            <person name="Hammon N."/>
            <person name="Israni S."/>
            <person name="Pitluck S."/>
            <person name="Goltsman E.G."/>
            <person name="Martinez M."/>
            <person name="Schmutz J."/>
            <person name="Larimer F."/>
            <person name="Land M."/>
            <person name="Hauser L."/>
            <person name="Kyrpides N."/>
            <person name="Kim E."/>
            <person name="Boone D.R."/>
            <person name="Brockman F."/>
            <person name="Culley D."/>
            <person name="Ferry J."/>
            <person name="Gunsalus R."/>
            <person name="McInerney M.J."/>
            <person name="Morrison M."/>
            <person name="Plugge C."/>
            <person name="Rohlin L."/>
            <person name="Scholten J."/>
            <person name="Sieber J."/>
            <person name="Stams A.J.M."/>
            <person name="Worm P."/>
            <person name="Henstra A.M."/>
            <person name="Richardson P."/>
        </authorList>
    </citation>
    <scope>NUCLEOTIDE SEQUENCE [LARGE SCALE GENOMIC DNA]</scope>
    <source>
        <strain>DSM 10017 / MPOB</strain>
    </source>
</reference>
<organism>
    <name type="scientific">Syntrophobacter fumaroxidans (strain DSM 10017 / MPOB)</name>
    <dbReference type="NCBI Taxonomy" id="335543"/>
    <lineage>
        <taxon>Bacteria</taxon>
        <taxon>Pseudomonadati</taxon>
        <taxon>Thermodesulfobacteriota</taxon>
        <taxon>Syntrophobacteria</taxon>
        <taxon>Syntrophobacterales</taxon>
        <taxon>Syntrophobacteraceae</taxon>
        <taxon>Syntrophobacter</taxon>
    </lineage>
</organism>
<protein>
    <recommendedName>
        <fullName evidence="1">Small ribosomal subunit protein bS20</fullName>
    </recommendedName>
    <alternativeName>
        <fullName evidence="3">30S ribosomal protein S20</fullName>
    </alternativeName>
</protein>
<feature type="chain" id="PRO_1000014667" description="Small ribosomal subunit protein bS20">
    <location>
        <begin position="1"/>
        <end position="86"/>
    </location>
</feature>
<feature type="region of interest" description="Disordered" evidence="2">
    <location>
        <begin position="1"/>
        <end position="27"/>
    </location>
</feature>
<feature type="compositionally biased region" description="Basic residues" evidence="2">
    <location>
        <begin position="1"/>
        <end position="11"/>
    </location>
</feature>
<sequence length="86" mass="9822">MANHKSALKRARQNEERRIRNRARKTRMKNVIRSLEEAIASNSRETALERLKMAVSVIDTTASRGVIHKNTASRKVARLSKRVNAL</sequence>
<evidence type="ECO:0000255" key="1">
    <source>
        <dbReference type="HAMAP-Rule" id="MF_00500"/>
    </source>
</evidence>
<evidence type="ECO:0000256" key="2">
    <source>
        <dbReference type="SAM" id="MobiDB-lite"/>
    </source>
</evidence>
<evidence type="ECO:0000305" key="3"/>
<keyword id="KW-1185">Reference proteome</keyword>
<keyword id="KW-0687">Ribonucleoprotein</keyword>
<keyword id="KW-0689">Ribosomal protein</keyword>
<keyword id="KW-0694">RNA-binding</keyword>
<keyword id="KW-0699">rRNA-binding</keyword>
<dbReference type="EMBL" id="CP000478">
    <property type="protein sequence ID" value="ABK17770.1"/>
    <property type="molecule type" value="Genomic_DNA"/>
</dbReference>
<dbReference type="RefSeq" id="WP_011698939.1">
    <property type="nucleotide sequence ID" value="NC_008554.1"/>
</dbReference>
<dbReference type="SMR" id="A0LK18"/>
<dbReference type="FunCoup" id="A0LK18">
    <property type="interactions" value="537"/>
</dbReference>
<dbReference type="STRING" id="335543.Sfum_2087"/>
<dbReference type="KEGG" id="sfu:Sfum_2087"/>
<dbReference type="eggNOG" id="COG0268">
    <property type="taxonomic scope" value="Bacteria"/>
</dbReference>
<dbReference type="HOGENOM" id="CLU_160655_3_1_7"/>
<dbReference type="InParanoid" id="A0LK18"/>
<dbReference type="OrthoDB" id="9807974at2"/>
<dbReference type="Proteomes" id="UP000001784">
    <property type="component" value="Chromosome"/>
</dbReference>
<dbReference type="GO" id="GO:0005829">
    <property type="term" value="C:cytosol"/>
    <property type="evidence" value="ECO:0007669"/>
    <property type="project" value="TreeGrafter"/>
</dbReference>
<dbReference type="GO" id="GO:0015935">
    <property type="term" value="C:small ribosomal subunit"/>
    <property type="evidence" value="ECO:0007669"/>
    <property type="project" value="TreeGrafter"/>
</dbReference>
<dbReference type="GO" id="GO:0070181">
    <property type="term" value="F:small ribosomal subunit rRNA binding"/>
    <property type="evidence" value="ECO:0007669"/>
    <property type="project" value="TreeGrafter"/>
</dbReference>
<dbReference type="GO" id="GO:0003735">
    <property type="term" value="F:structural constituent of ribosome"/>
    <property type="evidence" value="ECO:0007669"/>
    <property type="project" value="InterPro"/>
</dbReference>
<dbReference type="GO" id="GO:0006412">
    <property type="term" value="P:translation"/>
    <property type="evidence" value="ECO:0007669"/>
    <property type="project" value="UniProtKB-UniRule"/>
</dbReference>
<dbReference type="FunFam" id="1.20.58.110:FF:000001">
    <property type="entry name" value="30S ribosomal protein S20"/>
    <property type="match status" value="1"/>
</dbReference>
<dbReference type="Gene3D" id="1.20.58.110">
    <property type="entry name" value="Ribosomal protein S20"/>
    <property type="match status" value="1"/>
</dbReference>
<dbReference type="HAMAP" id="MF_00500">
    <property type="entry name" value="Ribosomal_bS20"/>
    <property type="match status" value="1"/>
</dbReference>
<dbReference type="InterPro" id="IPR002583">
    <property type="entry name" value="Ribosomal_bS20"/>
</dbReference>
<dbReference type="InterPro" id="IPR036510">
    <property type="entry name" value="Ribosomal_bS20_sf"/>
</dbReference>
<dbReference type="NCBIfam" id="TIGR00029">
    <property type="entry name" value="S20"/>
    <property type="match status" value="1"/>
</dbReference>
<dbReference type="PANTHER" id="PTHR33398">
    <property type="entry name" value="30S RIBOSOMAL PROTEIN S20"/>
    <property type="match status" value="1"/>
</dbReference>
<dbReference type="PANTHER" id="PTHR33398:SF1">
    <property type="entry name" value="SMALL RIBOSOMAL SUBUNIT PROTEIN BS20C"/>
    <property type="match status" value="1"/>
</dbReference>
<dbReference type="Pfam" id="PF01649">
    <property type="entry name" value="Ribosomal_S20p"/>
    <property type="match status" value="1"/>
</dbReference>
<dbReference type="SUPFAM" id="SSF46992">
    <property type="entry name" value="Ribosomal protein S20"/>
    <property type="match status" value="1"/>
</dbReference>